<protein>
    <recommendedName>
        <fullName evidence="1">Small ribosomal subunit protein uS15</fullName>
    </recommendedName>
    <alternativeName>
        <fullName evidence="2">30S ribosomal protein S15</fullName>
    </alternativeName>
</protein>
<name>RS15_BRUC2</name>
<evidence type="ECO:0000255" key="1">
    <source>
        <dbReference type="HAMAP-Rule" id="MF_01343"/>
    </source>
</evidence>
<evidence type="ECO:0000305" key="2"/>
<feature type="chain" id="PRO_1000086790" description="Small ribosomal subunit protein uS15">
    <location>
        <begin position="1"/>
        <end position="89"/>
    </location>
</feature>
<gene>
    <name evidence="1" type="primary">rpsO</name>
    <name type="ordered locus">BCAN_A2210</name>
</gene>
<keyword id="KW-1185">Reference proteome</keyword>
<keyword id="KW-0687">Ribonucleoprotein</keyword>
<keyword id="KW-0689">Ribosomal protein</keyword>
<keyword id="KW-0694">RNA-binding</keyword>
<keyword id="KW-0699">rRNA-binding</keyword>
<accession>A9M9Z7</accession>
<proteinExistence type="inferred from homology"/>
<dbReference type="EMBL" id="CP000872">
    <property type="protein sequence ID" value="ABX63192.1"/>
    <property type="molecule type" value="Genomic_DNA"/>
</dbReference>
<dbReference type="RefSeq" id="WP_002965230.1">
    <property type="nucleotide sequence ID" value="NC_010103.1"/>
</dbReference>
<dbReference type="SMR" id="A9M9Z7"/>
<dbReference type="GeneID" id="97534579"/>
<dbReference type="KEGG" id="bcs:BCAN_A2210"/>
<dbReference type="HOGENOM" id="CLU_148518_0_0_5"/>
<dbReference type="Proteomes" id="UP000001385">
    <property type="component" value="Chromosome I"/>
</dbReference>
<dbReference type="GO" id="GO:0022627">
    <property type="term" value="C:cytosolic small ribosomal subunit"/>
    <property type="evidence" value="ECO:0007669"/>
    <property type="project" value="TreeGrafter"/>
</dbReference>
<dbReference type="GO" id="GO:0019843">
    <property type="term" value="F:rRNA binding"/>
    <property type="evidence" value="ECO:0007669"/>
    <property type="project" value="UniProtKB-UniRule"/>
</dbReference>
<dbReference type="GO" id="GO:0003735">
    <property type="term" value="F:structural constituent of ribosome"/>
    <property type="evidence" value="ECO:0007669"/>
    <property type="project" value="InterPro"/>
</dbReference>
<dbReference type="GO" id="GO:0006412">
    <property type="term" value="P:translation"/>
    <property type="evidence" value="ECO:0007669"/>
    <property type="project" value="UniProtKB-UniRule"/>
</dbReference>
<dbReference type="CDD" id="cd00353">
    <property type="entry name" value="Ribosomal_S15p_S13e"/>
    <property type="match status" value="1"/>
</dbReference>
<dbReference type="FunFam" id="1.10.287.10:FF:000002">
    <property type="entry name" value="30S ribosomal protein S15"/>
    <property type="match status" value="1"/>
</dbReference>
<dbReference type="Gene3D" id="6.10.250.3130">
    <property type="match status" value="1"/>
</dbReference>
<dbReference type="Gene3D" id="1.10.287.10">
    <property type="entry name" value="S15/NS1, RNA-binding"/>
    <property type="match status" value="1"/>
</dbReference>
<dbReference type="HAMAP" id="MF_01343_B">
    <property type="entry name" value="Ribosomal_uS15_B"/>
    <property type="match status" value="1"/>
</dbReference>
<dbReference type="InterPro" id="IPR000589">
    <property type="entry name" value="Ribosomal_uS15"/>
</dbReference>
<dbReference type="InterPro" id="IPR005290">
    <property type="entry name" value="Ribosomal_uS15_bac-type"/>
</dbReference>
<dbReference type="InterPro" id="IPR009068">
    <property type="entry name" value="uS15_NS1_RNA-bd_sf"/>
</dbReference>
<dbReference type="NCBIfam" id="TIGR00952">
    <property type="entry name" value="S15_bact"/>
    <property type="match status" value="1"/>
</dbReference>
<dbReference type="PANTHER" id="PTHR23321">
    <property type="entry name" value="RIBOSOMAL PROTEIN S15, BACTERIAL AND ORGANELLAR"/>
    <property type="match status" value="1"/>
</dbReference>
<dbReference type="PANTHER" id="PTHR23321:SF26">
    <property type="entry name" value="SMALL RIBOSOMAL SUBUNIT PROTEIN US15M"/>
    <property type="match status" value="1"/>
</dbReference>
<dbReference type="Pfam" id="PF00312">
    <property type="entry name" value="Ribosomal_S15"/>
    <property type="match status" value="1"/>
</dbReference>
<dbReference type="SMART" id="SM01387">
    <property type="entry name" value="Ribosomal_S15"/>
    <property type="match status" value="1"/>
</dbReference>
<dbReference type="SUPFAM" id="SSF47060">
    <property type="entry name" value="S15/NS1 RNA-binding domain"/>
    <property type="match status" value="1"/>
</dbReference>
<dbReference type="PROSITE" id="PS00362">
    <property type="entry name" value="RIBOSOMAL_S15"/>
    <property type="match status" value="1"/>
</dbReference>
<reference key="1">
    <citation type="submission" date="2007-10" db="EMBL/GenBank/DDBJ databases">
        <title>Brucella canis ATCC 23365 whole genome shotgun sequencing project.</title>
        <authorList>
            <person name="Setubal J.C."/>
            <person name="Bowns C."/>
            <person name="Boyle S."/>
            <person name="Crasta O.R."/>
            <person name="Czar M.J."/>
            <person name="Dharmanolla C."/>
            <person name="Gillespie J.J."/>
            <person name="Kenyon R.W."/>
            <person name="Lu J."/>
            <person name="Mane S."/>
            <person name="Mohapatra S."/>
            <person name="Nagrani S."/>
            <person name="Purkayastha A."/>
            <person name="Rajasimha H.K."/>
            <person name="Shallom J.M."/>
            <person name="Shallom S."/>
            <person name="Shukla M."/>
            <person name="Snyder E.E."/>
            <person name="Sobral B.W."/>
            <person name="Wattam A.R."/>
            <person name="Will R."/>
            <person name="Williams K."/>
            <person name="Yoo H."/>
            <person name="Bruce D."/>
            <person name="Detter C."/>
            <person name="Munk C."/>
            <person name="Brettin T.S."/>
        </authorList>
    </citation>
    <scope>NUCLEOTIDE SEQUENCE [LARGE SCALE GENOMIC DNA]</scope>
    <source>
        <strain>ATCC 23365 / NCTC 10854 / RM-666</strain>
    </source>
</reference>
<comment type="function">
    <text evidence="1">One of the primary rRNA binding proteins, it binds directly to 16S rRNA where it helps nucleate assembly of the platform of the 30S subunit by binding and bridging several RNA helices of the 16S rRNA.</text>
</comment>
<comment type="function">
    <text evidence="1">Forms an intersubunit bridge (bridge B4) with the 23S rRNA of the 50S subunit in the ribosome.</text>
</comment>
<comment type="subunit">
    <text evidence="1">Part of the 30S ribosomal subunit. Forms a bridge to the 50S subunit in the 70S ribosome, contacting the 23S rRNA.</text>
</comment>
<comment type="similarity">
    <text evidence="1">Belongs to the universal ribosomal protein uS15 family.</text>
</comment>
<organism>
    <name type="scientific">Brucella canis (strain ATCC 23365 / NCTC 10854 / RM-666)</name>
    <dbReference type="NCBI Taxonomy" id="483179"/>
    <lineage>
        <taxon>Bacteria</taxon>
        <taxon>Pseudomonadati</taxon>
        <taxon>Pseudomonadota</taxon>
        <taxon>Alphaproteobacteria</taxon>
        <taxon>Hyphomicrobiales</taxon>
        <taxon>Brucellaceae</taxon>
        <taxon>Brucella/Ochrobactrum group</taxon>
        <taxon>Brucella</taxon>
    </lineage>
</organism>
<sequence length="89" mass="10210">MSITAERKQALIKEYATKEGDTGSPEVQVAVLSERIANLTEHFKGHKNDNHSRRGLLKLVSQRRRLLDYVKGVDHARYQALITRLGLRR</sequence>